<dbReference type="EC" id="3.1.3.48"/>
<dbReference type="EMBL" id="M37992">
    <property type="protein sequence ID" value="AAA29825.1"/>
    <property type="molecule type" value="mRNA"/>
</dbReference>
<dbReference type="SMR" id="P28199"/>
<dbReference type="GO" id="GO:0004725">
    <property type="term" value="F:protein tyrosine phosphatase activity"/>
    <property type="evidence" value="ECO:0007669"/>
    <property type="project" value="UniProtKB-EC"/>
</dbReference>
<dbReference type="Gene3D" id="3.90.190.10">
    <property type="entry name" value="Protein tyrosine phosphatase superfamily"/>
    <property type="match status" value="1"/>
</dbReference>
<dbReference type="InterPro" id="IPR029021">
    <property type="entry name" value="Prot-tyrosine_phosphatase-like"/>
</dbReference>
<dbReference type="InterPro" id="IPR050348">
    <property type="entry name" value="Protein-Tyr_Phosphatase"/>
</dbReference>
<dbReference type="InterPro" id="IPR000242">
    <property type="entry name" value="PTP_cat"/>
</dbReference>
<dbReference type="PANTHER" id="PTHR19134">
    <property type="entry name" value="RECEPTOR-TYPE TYROSINE-PROTEIN PHOSPHATASE"/>
    <property type="match status" value="1"/>
</dbReference>
<dbReference type="PANTHER" id="PTHR19134:SF540">
    <property type="entry name" value="TYROSINE-PROTEIN PHOSPHATASE 99A"/>
    <property type="match status" value="1"/>
</dbReference>
<dbReference type="Pfam" id="PF00102">
    <property type="entry name" value="Y_phosphatase"/>
    <property type="match status" value="1"/>
</dbReference>
<dbReference type="SUPFAM" id="SSF52799">
    <property type="entry name" value="(Phosphotyrosine protein) phosphatases II"/>
    <property type="match status" value="1"/>
</dbReference>
<dbReference type="PROSITE" id="PS50055">
    <property type="entry name" value="TYR_PHOSPHATASE_PTP"/>
    <property type="match status" value="1"/>
</dbReference>
<reference key="1">
    <citation type="journal article" date="1991" name="Immunogenetics">
        <title>Protein tyrosine phosphatase domains from the protochordate Styela plicata.</title>
        <authorList>
            <person name="Matthews R.J."/>
            <person name="Flores E."/>
            <person name="Thomas M.L."/>
        </authorList>
    </citation>
    <scope>NUCLEOTIDE SEQUENCE [MRNA]</scope>
</reference>
<reference key="2">
    <citation type="submission" date="1998-12" db="EMBL/GenBank/DDBJ databases">
        <authorList>
            <person name="Matthews R.J."/>
            <person name="Flores E."/>
            <person name="Thomas M.L."/>
        </authorList>
    </citation>
    <scope>SEQUENCE REVISION TO C-TERMINUS</scope>
</reference>
<feature type="chain" id="PRO_0000094895" description="Tyrosine-protein phosphatase 7">
    <location>
        <begin position="1" status="less than"/>
        <end position="112" status="greater than"/>
    </location>
</feature>
<feature type="domain" description="Tyrosine-protein phosphatase" evidence="2">
    <location>
        <begin position="1" status="less than"/>
        <end position="112" status="greater than"/>
    </location>
</feature>
<feature type="binding site" evidence="1">
    <location>
        <position position="82"/>
    </location>
    <ligand>
        <name>substrate</name>
    </ligand>
</feature>
<feature type="non-terminal residue">
    <location>
        <position position="1"/>
    </location>
</feature>
<feature type="non-terminal residue">
    <location>
        <position position="112"/>
    </location>
</feature>
<comment type="catalytic activity">
    <reaction evidence="3">
        <text>O-phospho-L-tyrosyl-[protein] + H2O = L-tyrosyl-[protein] + phosphate</text>
        <dbReference type="Rhea" id="RHEA:10684"/>
        <dbReference type="Rhea" id="RHEA-COMP:10136"/>
        <dbReference type="Rhea" id="RHEA-COMP:20101"/>
        <dbReference type="ChEBI" id="CHEBI:15377"/>
        <dbReference type="ChEBI" id="CHEBI:43474"/>
        <dbReference type="ChEBI" id="CHEBI:46858"/>
        <dbReference type="ChEBI" id="CHEBI:61978"/>
        <dbReference type="EC" id="3.1.3.48"/>
    </reaction>
</comment>
<comment type="similarity">
    <text evidence="4">Belongs to the protein-tyrosine phosphatase family.</text>
</comment>
<proteinExistence type="evidence at transcript level"/>
<sequence>NNVTIIVMITNLLENGRKKCDQYWPHDGREQYKHISVTLRDVDIYANYIVRSFQLRNTKLSKRRSRNNERRILQYHYTQWPDHGTPEYILPLLKFIRISSVVSSPESGPIVV</sequence>
<organism>
    <name type="scientific">Styela plicata</name>
    <name type="common">Wrinkled sea squirt</name>
    <name type="synonym">Ascidia plicata</name>
    <dbReference type="NCBI Taxonomy" id="7726"/>
    <lineage>
        <taxon>Eukaryota</taxon>
        <taxon>Metazoa</taxon>
        <taxon>Chordata</taxon>
        <taxon>Tunicata</taxon>
        <taxon>Ascidiacea</taxon>
        <taxon>Stolidobranchia</taxon>
        <taxon>Styelidae</taxon>
        <taxon>Styela</taxon>
    </lineage>
</organism>
<accession>P28199</accession>
<keyword id="KW-0378">Hydrolase</keyword>
<keyword id="KW-0904">Protein phosphatase</keyword>
<protein>
    <recommendedName>
        <fullName>Tyrosine-protein phosphatase 7</fullName>
        <ecNumber>3.1.3.48</ecNumber>
    </recommendedName>
</protein>
<evidence type="ECO:0000250" key="1"/>
<evidence type="ECO:0000255" key="2">
    <source>
        <dbReference type="PROSITE-ProRule" id="PRU00160"/>
    </source>
</evidence>
<evidence type="ECO:0000255" key="3">
    <source>
        <dbReference type="PROSITE-ProRule" id="PRU10044"/>
    </source>
</evidence>
<evidence type="ECO:0000305" key="4"/>
<gene>
    <name type="primary">STY-7</name>
</gene>
<name>PTP7_STYPL</name>